<keyword id="KW-0903">Direct protein sequencing</keyword>
<keyword id="KW-1015">Disulfide bond</keyword>
<keyword id="KW-0372">Hormone</keyword>
<keyword id="KW-1185">Reference proteome</keyword>
<keyword id="KW-0964">Secreted</keyword>
<protein>
    <recommendedName>
        <fullName>Stanniocalcin-2</fullName>
        <shortName>STC-2</shortName>
    </recommendedName>
</protein>
<organism>
    <name type="scientific">Cavia porcellus</name>
    <name type="common">Guinea pig</name>
    <dbReference type="NCBI Taxonomy" id="10141"/>
    <lineage>
        <taxon>Eukaryota</taxon>
        <taxon>Metazoa</taxon>
        <taxon>Chordata</taxon>
        <taxon>Craniata</taxon>
        <taxon>Vertebrata</taxon>
        <taxon>Euteleostomi</taxon>
        <taxon>Mammalia</taxon>
        <taxon>Eutheria</taxon>
        <taxon>Euarchontoglires</taxon>
        <taxon>Glires</taxon>
        <taxon>Rodentia</taxon>
        <taxon>Hystricomorpha</taxon>
        <taxon>Caviidae</taxon>
        <taxon>Cavia</taxon>
    </lineage>
</organism>
<evidence type="ECO:0000250" key="1"/>
<evidence type="ECO:0000256" key="2">
    <source>
        <dbReference type="SAM" id="MobiDB-lite"/>
    </source>
</evidence>
<evidence type="ECO:0000305" key="3"/>
<accession>P57675</accession>
<reference key="1">
    <citation type="journal article" date="1999" name="Horm. Metab. Res.">
        <title>Stanniocalcin 2: characterization of the protein and its localization to human pancreatic alpha cells.</title>
        <authorList>
            <person name="Moore E.E."/>
            <person name="Kuestner R.E."/>
            <person name="Conklin D.C."/>
            <person name="Whitmore T.E."/>
            <person name="Downey W."/>
            <person name="Buddle M.M."/>
            <person name="Adams R.L."/>
            <person name="Bell L.A."/>
            <person name="Thompson D.L."/>
            <person name="Wolf A."/>
            <person name="Chen L."/>
            <person name="Stamm M.R."/>
            <person name="Grant F.J."/>
            <person name="Lok S."/>
            <person name="Ren H."/>
            <person name="de Jongh K.S."/>
        </authorList>
    </citation>
    <scope>PROTEIN SEQUENCE</scope>
</reference>
<proteinExistence type="evidence at protein level"/>
<name>STC2_CAVPO</name>
<gene>
    <name type="primary">STC2</name>
</gene>
<comment type="function">
    <text>Has an anti-hypocalcemic action on calcium and phosphate homeostasis.</text>
</comment>
<comment type="subunit">
    <text evidence="1">Homodimer; disulfide-linked.</text>
</comment>
<comment type="subcellular location">
    <subcellularLocation>
        <location evidence="3">Secreted</location>
    </subcellularLocation>
</comment>
<comment type="similarity">
    <text evidence="3">Belongs to the stanniocalcin family.</text>
</comment>
<feature type="chain" id="PRO_0000182019" description="Stanniocalcin-2">
    <location>
        <begin position="1"/>
        <end position="197"/>
    </location>
</feature>
<feature type="region of interest" description="Disordered" evidence="2">
    <location>
        <begin position="1"/>
        <end position="20"/>
    </location>
</feature>
<feature type="non-consecutive residues" evidence="3">
    <location>
        <begin position="60"/>
        <end position="61"/>
    </location>
</feature>
<feature type="non-consecutive residues" evidence="3">
    <location>
        <begin position="64"/>
        <end position="65"/>
    </location>
</feature>
<feature type="non-consecutive residues" evidence="3">
    <location>
        <begin position="69"/>
        <end position="70"/>
    </location>
</feature>
<feature type="non-consecutive residues" evidence="3">
    <location>
        <begin position="75"/>
        <end position="76"/>
    </location>
</feature>
<feature type="non-consecutive residues" evidence="3">
    <location>
        <begin position="92"/>
        <end position="93"/>
    </location>
</feature>
<feature type="non-consecutive residues" evidence="3">
    <location>
        <begin position="154"/>
        <end position="155"/>
    </location>
</feature>
<sequence>TDAXNPPEGPQDRGSQQKGRLSLQNTAEIQHCLVNAGDVGCGVFECFENNXCXIXXLHXISFIKAHALRFGCISREMVFQLQRECYLKHDLCMINFRDLLLHEPYVDLVNLLLTCGEDVKEAVTRSIQAQCEQNWGGLCSILSFCTSNVQRPXAXQPXADRAQVSRPHHHDTGHHLLEAIXGAKGERGSKSHPSVRA</sequence>
<dbReference type="InParanoid" id="P57675"/>
<dbReference type="Proteomes" id="UP000005447">
    <property type="component" value="Unassembled WGS sequence"/>
</dbReference>
<dbReference type="GO" id="GO:0005615">
    <property type="term" value="C:extracellular space"/>
    <property type="evidence" value="ECO:0007669"/>
    <property type="project" value="TreeGrafter"/>
</dbReference>
<dbReference type="GO" id="GO:0005179">
    <property type="term" value="F:hormone activity"/>
    <property type="evidence" value="ECO:0007669"/>
    <property type="project" value="UniProtKB-KW"/>
</dbReference>
<dbReference type="GO" id="GO:0006874">
    <property type="term" value="P:intracellular calcium ion homeostasis"/>
    <property type="evidence" value="ECO:0007669"/>
    <property type="project" value="TreeGrafter"/>
</dbReference>
<dbReference type="InterPro" id="IPR004978">
    <property type="entry name" value="Stanniocalcin"/>
</dbReference>
<dbReference type="PANTHER" id="PTHR11245">
    <property type="entry name" value="STANNIOCALCIN"/>
    <property type="match status" value="1"/>
</dbReference>
<dbReference type="PANTHER" id="PTHR11245:SF2">
    <property type="entry name" value="STANNIOCALCIN-2"/>
    <property type="match status" value="1"/>
</dbReference>
<dbReference type="Pfam" id="PF03298">
    <property type="entry name" value="Stanniocalcin"/>
    <property type="match status" value="2"/>
</dbReference>